<feature type="initiator methionine" description="Removed" evidence="5">
    <location>
        <position position="1"/>
    </location>
</feature>
<feature type="chain" id="PRO_0000071682" description="ATP synthase F(0) complex subunit e, mitochondrial">
    <location>
        <begin position="2"/>
        <end position="71"/>
    </location>
</feature>
<feature type="modified residue" description="N6-acetyllysine" evidence="3">
    <location>
        <position position="34"/>
    </location>
</feature>
<feature type="helix" evidence="8">
    <location>
        <begin position="9"/>
        <end position="42"/>
    </location>
</feature>
<gene>
    <name evidence="2" type="primary">ATP5ME</name>
    <name type="synonym">ATP5I</name>
</gene>
<proteinExistence type="evidence at protein level"/>
<sequence length="71" mass="8321">MVPPVQVSPLIKLGRYSALFLGMAYGAKRYNYLKPRAEEERRLAAEEKKKRDEQKRIERELAEAQEDTILK</sequence>
<comment type="function">
    <text evidence="1 2">Subunit e, of the mitochondrial membrane ATP synthase complex (F(1)F(0) ATP synthase or Complex V) that produces ATP from ADP in the presence of a proton gradient across the membrane which is generated by electron transport complexes of the respiratory chain. ATP synthase complex consist of a soluble F(1) head domain - the catalytic core - and a membrane F(1) domain - the membrane proton channel. These two domains are linked by a central stalk rotating inside the F(1) region and a stationary peripheral stalk. During catalysis, ATP synthesis in the catalytic domain of F(1) is coupled via a rotary mechanism of the central stalk subunits to proton translocation (By similarity). In vivo, can only synthesize ATP although its ATP hydrolase activity can be activated artificially in vitro (By similarity). Part of the complex F(0) domain (By similarity).</text>
</comment>
<comment type="subunit">
    <text evidence="2 4 6">Component of the ATP synthase complex composed at least of ATP5F1A/subunit alpha, ATP5F1B/subunit beta, ATP5MC1/subunit c (homooctomer), MT-ATP6/subunit a, MT-ATP8/subunit 8, ATP5ME/subunit e, ATP5MF/subunit f, ATP5MG/subunit g, ATP5MK/subunit k, ATP5MJ/subunit j, ATP5F1C/subunit gamma, ATP5F1D/subunit delta, ATP5F1E/subunit epsilon, ATP5PF/subunit F6, ATP5PB/subunit b, ATP5PD/subunit d, ATP5PO/subunit OSCP (PubMed:17570365, PubMed:25851905). ATP synthase complex consists of a soluble F(1) head domain (subunits alpha(3) and beta(3)) - the catalytic core - and a membrane F(0) domain - the membrane proton channel (subunits c, a, 8, e, f, g, k and j). These two domains are linked by a central stalk (subunits gamma, delta, and epsilon) rotating inside the F1 region and a stationary peripheral stalk (subunits F6, b, d, and OSCP) (By similarity).</text>
</comment>
<comment type="subcellular location">
    <subcellularLocation>
        <location>Mitochondrion</location>
    </subcellularLocation>
    <subcellularLocation>
        <location>Mitochondrion inner membrane</location>
    </subcellularLocation>
</comment>
<comment type="similarity">
    <text evidence="7">Belongs to the ATPase e subunit family.</text>
</comment>
<name>ATP5I_BOVIN</name>
<keyword id="KW-0002">3D-structure</keyword>
<keyword id="KW-0007">Acetylation</keyword>
<keyword id="KW-0066">ATP synthesis</keyword>
<keyword id="KW-0138">CF(0)</keyword>
<keyword id="KW-0903">Direct protein sequencing</keyword>
<keyword id="KW-0375">Hydrogen ion transport</keyword>
<keyword id="KW-0406">Ion transport</keyword>
<keyword id="KW-0472">Membrane</keyword>
<keyword id="KW-0496">Mitochondrion</keyword>
<keyword id="KW-0999">Mitochondrion inner membrane</keyword>
<keyword id="KW-1185">Reference proteome</keyword>
<keyword id="KW-0813">Transport</keyword>
<evidence type="ECO:0000250" key="1">
    <source>
        <dbReference type="UniProtKB" id="P19483"/>
    </source>
</evidence>
<evidence type="ECO:0000250" key="2">
    <source>
        <dbReference type="UniProtKB" id="P56385"/>
    </source>
</evidence>
<evidence type="ECO:0000250" key="3">
    <source>
        <dbReference type="UniProtKB" id="Q06185"/>
    </source>
</evidence>
<evidence type="ECO:0000269" key="4">
    <source>
    </source>
</evidence>
<evidence type="ECO:0000269" key="5">
    <source>
    </source>
</evidence>
<evidence type="ECO:0000269" key="6">
    <source>
    </source>
</evidence>
<evidence type="ECO:0000305" key="7"/>
<evidence type="ECO:0007829" key="8">
    <source>
        <dbReference type="PDB" id="6ZIT"/>
    </source>
</evidence>
<protein>
    <recommendedName>
        <fullName evidence="2">ATP synthase F(0) complex subunit e, mitochondrial</fullName>
        <shortName>ATPase subunit e</shortName>
    </recommendedName>
    <alternativeName>
        <fullName evidence="7">ATP synthase membrane subunit e</fullName>
    </alternativeName>
</protein>
<organism>
    <name type="scientific">Bos taurus</name>
    <name type="common">Bovine</name>
    <dbReference type="NCBI Taxonomy" id="9913"/>
    <lineage>
        <taxon>Eukaryota</taxon>
        <taxon>Metazoa</taxon>
        <taxon>Chordata</taxon>
        <taxon>Craniata</taxon>
        <taxon>Vertebrata</taxon>
        <taxon>Euteleostomi</taxon>
        <taxon>Mammalia</taxon>
        <taxon>Eutheria</taxon>
        <taxon>Laurasiatheria</taxon>
        <taxon>Artiodactyla</taxon>
        <taxon>Ruminantia</taxon>
        <taxon>Pecora</taxon>
        <taxon>Bovidae</taxon>
        <taxon>Bovinae</taxon>
        <taxon>Bos</taxon>
    </lineage>
</organism>
<accession>Q00361</accession>
<accession>Q3T0S4</accession>
<reference key="1">
    <citation type="journal article" date="1991" name="Biochemistry">
        <title>Identification of the subunits of F1F0-ATPase from bovine heart mitochondria.</title>
        <authorList>
            <person name="Walker J.E."/>
            <person name="Lutter R."/>
            <person name="Dupuis A."/>
            <person name="Runswick M.J."/>
        </authorList>
    </citation>
    <scope>NUCLEOTIDE SEQUENCE [MRNA]</scope>
    <scope>PROTEIN SEQUENCE OF 2-36</scope>
    <source>
        <tissue>Heart</tissue>
    </source>
</reference>
<reference key="2">
    <citation type="submission" date="2005-08" db="EMBL/GenBank/DDBJ databases">
        <authorList>
            <consortium name="NIH - Mammalian Gene Collection (MGC) project"/>
        </authorList>
    </citation>
    <scope>NUCLEOTIDE SEQUENCE [LARGE SCALE MRNA]</scope>
    <source>
        <strain>Crossbred X Angus</strain>
        <tissue>Ileum</tissue>
    </source>
</reference>
<reference key="3">
    <citation type="journal article" date="2007" name="FEBS Lett.">
        <title>Association of two proteolipids of unknown function with ATP synthase from bovine heart mitochondria.</title>
        <authorList>
            <person name="Chen R."/>
            <person name="Runswick M.J."/>
            <person name="Carroll J."/>
            <person name="Fearnley I.M."/>
            <person name="Walker J.E."/>
        </authorList>
    </citation>
    <scope>IDENTIFICATION IN THE ATP SYNTHASE COMPLEX</scope>
</reference>
<reference key="4">
    <citation type="journal article" date="2015" name="J. Biol. Chem.">
        <title>Organization of Subunits in the Membrane Domain of the Bovine F-ATPase Revealed by Covalent Cross-linking.</title>
        <authorList>
            <person name="Lee J."/>
            <person name="Ding S."/>
            <person name="Walpole T.B."/>
            <person name="Holding A.N."/>
            <person name="Montgomery M.G."/>
            <person name="Fearnley I.M."/>
            <person name="Walker J.E."/>
        </authorList>
    </citation>
    <scope>IDENTIFICATION BY MASS SPECTROMETRY</scope>
    <scope>IDENTIFICATION IN THE ATP SYNTHASE COMPLEX</scope>
</reference>
<dbReference type="EMBL" id="M64751">
    <property type="protein sequence ID" value="AAA30390.1"/>
    <property type="molecule type" value="mRNA"/>
</dbReference>
<dbReference type="EMBL" id="BC102279">
    <property type="protein sequence ID" value="AAI02280.1"/>
    <property type="molecule type" value="mRNA"/>
</dbReference>
<dbReference type="PIR" id="A39566">
    <property type="entry name" value="A39566"/>
</dbReference>
<dbReference type="RefSeq" id="NP_788812.1">
    <property type="nucleotide sequence ID" value="NM_176639.2"/>
</dbReference>
<dbReference type="PDB" id="6ZBB">
    <property type="method" value="EM"/>
    <property type="resolution" value="3.61 A"/>
    <property type="chains" value="e=2-71"/>
</dbReference>
<dbReference type="PDB" id="6ZIQ">
    <property type="method" value="EM"/>
    <property type="resolution" value="4.33 A"/>
    <property type="chains" value="e=2-71"/>
</dbReference>
<dbReference type="PDB" id="6ZIT">
    <property type="method" value="EM"/>
    <property type="resolution" value="3.49 A"/>
    <property type="chains" value="e=2-71"/>
</dbReference>
<dbReference type="PDB" id="6ZIU">
    <property type="method" value="EM"/>
    <property type="resolution" value="6.02 A"/>
    <property type="chains" value="e=2-71"/>
</dbReference>
<dbReference type="PDB" id="6ZPO">
    <property type="method" value="EM"/>
    <property type="resolution" value="4.00 A"/>
    <property type="chains" value="e=2-71"/>
</dbReference>
<dbReference type="PDB" id="6ZQM">
    <property type="method" value="EM"/>
    <property type="resolution" value="3.29 A"/>
    <property type="chains" value="e=2-71"/>
</dbReference>
<dbReference type="PDB" id="6ZQN">
    <property type="method" value="EM"/>
    <property type="resolution" value="4.00 A"/>
    <property type="chains" value="e=2-71"/>
</dbReference>
<dbReference type="PDB" id="7AJB">
    <property type="method" value="EM"/>
    <property type="resolution" value="9.20 A"/>
    <property type="chains" value="Ae/e=2-71"/>
</dbReference>
<dbReference type="PDB" id="7AJC">
    <property type="method" value="EM"/>
    <property type="resolution" value="11.90 A"/>
    <property type="chains" value="Ae/e=2-71"/>
</dbReference>
<dbReference type="PDB" id="7AJD">
    <property type="method" value="EM"/>
    <property type="resolution" value="9.00 A"/>
    <property type="chains" value="Ae/e=2-71"/>
</dbReference>
<dbReference type="PDB" id="7AJE">
    <property type="method" value="EM"/>
    <property type="resolution" value="9.40 A"/>
    <property type="chains" value="Ae/e=2-71"/>
</dbReference>
<dbReference type="PDB" id="7AJF">
    <property type="method" value="EM"/>
    <property type="resolution" value="8.45 A"/>
    <property type="chains" value="Ae/e=2-71"/>
</dbReference>
<dbReference type="PDB" id="7AJG">
    <property type="method" value="EM"/>
    <property type="resolution" value="10.70 A"/>
    <property type="chains" value="Ae/e=2-71"/>
</dbReference>
<dbReference type="PDB" id="7AJH">
    <property type="method" value="EM"/>
    <property type="resolution" value="9.70 A"/>
    <property type="chains" value="Ae/e=2-71"/>
</dbReference>
<dbReference type="PDB" id="7AJI">
    <property type="method" value="EM"/>
    <property type="resolution" value="11.40 A"/>
    <property type="chains" value="Ae/e=2-71"/>
</dbReference>
<dbReference type="PDB" id="7AJJ">
    <property type="method" value="EM"/>
    <property type="resolution" value="13.10 A"/>
    <property type="chains" value="Ae/e=2-71"/>
</dbReference>
<dbReference type="PDBsum" id="6ZBB"/>
<dbReference type="PDBsum" id="6ZIQ"/>
<dbReference type="PDBsum" id="6ZIT"/>
<dbReference type="PDBsum" id="6ZIU"/>
<dbReference type="PDBsum" id="6ZPO"/>
<dbReference type="PDBsum" id="6ZQM"/>
<dbReference type="PDBsum" id="6ZQN"/>
<dbReference type="PDBsum" id="7AJB"/>
<dbReference type="PDBsum" id="7AJC"/>
<dbReference type="PDBsum" id="7AJD"/>
<dbReference type="PDBsum" id="7AJE"/>
<dbReference type="PDBsum" id="7AJF"/>
<dbReference type="PDBsum" id="7AJG"/>
<dbReference type="PDBsum" id="7AJH"/>
<dbReference type="PDBsum" id="7AJI"/>
<dbReference type="PDBsum" id="7AJJ"/>
<dbReference type="EMDB" id="EMD-11149"/>
<dbReference type="EMDB" id="EMD-11228"/>
<dbReference type="EMDB" id="EMD-11229"/>
<dbReference type="EMDB" id="EMD-11230"/>
<dbReference type="EMDB" id="EMD-11342"/>
<dbReference type="EMDB" id="EMD-11368"/>
<dbReference type="EMDB" id="EMD-11369"/>
<dbReference type="EMDB" id="EMD-11428"/>
<dbReference type="EMDB" id="EMD-11429"/>
<dbReference type="EMDB" id="EMD-11430"/>
<dbReference type="SMR" id="Q00361"/>
<dbReference type="CORUM" id="Q00361"/>
<dbReference type="FunCoup" id="Q00361">
    <property type="interactions" value="1052"/>
</dbReference>
<dbReference type="IntAct" id="Q00361">
    <property type="interactions" value="3"/>
</dbReference>
<dbReference type="MINT" id="Q00361"/>
<dbReference type="STRING" id="9913.ENSBTAP00000054206"/>
<dbReference type="PaxDb" id="9913-ENSBTAP00000023255"/>
<dbReference type="PeptideAtlas" id="Q00361"/>
<dbReference type="GeneID" id="338040"/>
<dbReference type="KEGG" id="bta:338040"/>
<dbReference type="CTD" id="521"/>
<dbReference type="VEuPathDB" id="HostDB:ENSBTAG00000017496"/>
<dbReference type="eggNOG" id="KOG4326">
    <property type="taxonomic scope" value="Eukaryota"/>
</dbReference>
<dbReference type="HOGENOM" id="CLU_180903_0_0_1"/>
<dbReference type="InParanoid" id="Q00361"/>
<dbReference type="OMA" id="CWRIFET"/>
<dbReference type="OrthoDB" id="9982108at2759"/>
<dbReference type="TreeFam" id="TF314719"/>
<dbReference type="Reactome" id="R-BTA-163210">
    <property type="pathway name" value="Formation of ATP by chemiosmotic coupling"/>
</dbReference>
<dbReference type="Reactome" id="R-BTA-8949613">
    <property type="pathway name" value="Cristae formation"/>
</dbReference>
<dbReference type="Proteomes" id="UP000009136">
    <property type="component" value="Chromosome 6"/>
</dbReference>
<dbReference type="Bgee" id="ENSBTAG00000017496">
    <property type="expression patterns" value="Expressed in tongue muscle and 106 other cell types or tissues"/>
</dbReference>
<dbReference type="GO" id="GO:0005743">
    <property type="term" value="C:mitochondrial inner membrane"/>
    <property type="evidence" value="ECO:0007669"/>
    <property type="project" value="UniProtKB-SubCell"/>
</dbReference>
<dbReference type="GO" id="GO:0005739">
    <property type="term" value="C:mitochondrion"/>
    <property type="evidence" value="ECO:0000305"/>
    <property type="project" value="UniProtKB"/>
</dbReference>
<dbReference type="GO" id="GO:0045259">
    <property type="term" value="C:proton-transporting ATP synthase complex"/>
    <property type="evidence" value="ECO:0000314"/>
    <property type="project" value="UniProtKB"/>
</dbReference>
<dbReference type="GO" id="GO:0015078">
    <property type="term" value="F:proton transmembrane transporter activity"/>
    <property type="evidence" value="ECO:0007669"/>
    <property type="project" value="InterPro"/>
</dbReference>
<dbReference type="GO" id="GO:0015986">
    <property type="term" value="P:proton motive force-driven ATP synthesis"/>
    <property type="evidence" value="ECO:0007669"/>
    <property type="project" value="InterPro"/>
</dbReference>
<dbReference type="InterPro" id="IPR008386">
    <property type="entry name" value="ATP_synth_F0_esu_mt"/>
</dbReference>
<dbReference type="PANTHER" id="PTHR12427">
    <property type="entry name" value="ATP SYNTHASE E CHAIN, MITOCHONDRIAL"/>
    <property type="match status" value="1"/>
</dbReference>
<dbReference type="PANTHER" id="PTHR12427:SF1">
    <property type="entry name" value="ATP SYNTHASE SUBUNIT E, MITOCHONDRIAL"/>
    <property type="match status" value="1"/>
</dbReference>
<dbReference type="Pfam" id="PF05680">
    <property type="entry name" value="ATP-synt_E"/>
    <property type="match status" value="1"/>
</dbReference>